<reference key="1">
    <citation type="submission" date="2008-10" db="EMBL/GenBank/DDBJ databases">
        <title>Comparing putative pathogenicity factors between Trichophyton tonsurans and Trichophyton equinum.</title>
        <authorList>
            <person name="Preuett B.L."/>
            <person name="Abdel-Rahman S.M."/>
        </authorList>
    </citation>
    <scope>NUCLEOTIDE SEQUENCE [GENOMIC DNA]</scope>
</reference>
<protein>
    <recommendedName>
        <fullName>Carboxypeptidase Y homolog A</fullName>
        <ecNumber>3.4.16.5</ecNumber>
    </recommendedName>
</protein>
<comment type="function">
    <text evidence="1">Vacuolar carboxypeptidase involved in degradation of small peptides. Digests preferentially peptides containing an aliphatic or hydrophobic residue in P1' position, as well as methionine, leucine or phenylalanine in P1 position of ester substrate (By similarity).</text>
</comment>
<comment type="catalytic activity">
    <reaction evidence="3">
        <text>Release of a C-terminal amino acid with broad specificity.</text>
        <dbReference type="EC" id="3.4.16.5"/>
    </reaction>
</comment>
<comment type="subcellular location">
    <subcellularLocation>
        <location evidence="1">Vacuole</location>
    </subcellularLocation>
</comment>
<comment type="similarity">
    <text evidence="4">Belongs to the peptidase S10 family.</text>
</comment>
<name>CBPYA_TRIEQ</name>
<feature type="signal peptide" evidence="2">
    <location>
        <begin position="1"/>
        <end position="17"/>
    </location>
</feature>
<feature type="propeptide" id="PRO_0000407482" evidence="1">
    <location>
        <begin position="18"/>
        <end position="124"/>
    </location>
</feature>
<feature type="chain" id="PRO_0000407483" description="Carboxypeptidase Y homolog A">
    <location>
        <begin position="125"/>
        <end position="543"/>
    </location>
</feature>
<feature type="active site" evidence="3">
    <location>
        <position position="266"/>
    </location>
</feature>
<feature type="active site" evidence="3">
    <location>
        <position position="458"/>
    </location>
</feature>
<feature type="active site" evidence="3">
    <location>
        <position position="520"/>
    </location>
</feature>
<feature type="glycosylation site" description="N-linked (GlcNAc...) asparagine" evidence="2">
    <location>
        <position position="210"/>
    </location>
</feature>
<feature type="glycosylation site" description="N-linked (GlcNAc...) asparagine" evidence="2">
    <location>
        <position position="509"/>
    </location>
</feature>
<feature type="disulfide bond" evidence="1">
    <location>
        <begin position="179"/>
        <end position="419"/>
    </location>
</feature>
<feature type="disulfide bond" evidence="1">
    <location>
        <begin position="313"/>
        <end position="327"/>
    </location>
</feature>
<feature type="disulfide bond" evidence="1">
    <location>
        <begin position="337"/>
        <end position="360"/>
    </location>
</feature>
<feature type="disulfide bond" evidence="1">
    <location>
        <begin position="344"/>
        <end position="353"/>
    </location>
</feature>
<feature type="disulfide bond" evidence="1">
    <location>
        <begin position="382"/>
        <end position="389"/>
    </location>
</feature>
<accession>B8XGR4</accession>
<evidence type="ECO:0000250" key="1"/>
<evidence type="ECO:0000255" key="2"/>
<evidence type="ECO:0000255" key="3">
    <source>
        <dbReference type="PROSITE-ProRule" id="PRU10074"/>
    </source>
</evidence>
<evidence type="ECO:0000305" key="4"/>
<dbReference type="EC" id="3.4.16.5"/>
<dbReference type="EMBL" id="FJ348246">
    <property type="protein sequence ID" value="ACL37336.1"/>
    <property type="molecule type" value="Genomic_DNA"/>
</dbReference>
<dbReference type="SMR" id="B8XGR4"/>
<dbReference type="ESTHER" id="triru-q5j6j0">
    <property type="family name" value="Carboxypeptidase_S10"/>
</dbReference>
<dbReference type="MEROPS" id="S10.001"/>
<dbReference type="GlyCosmos" id="B8XGR4">
    <property type="glycosylation" value="2 sites, No reported glycans"/>
</dbReference>
<dbReference type="VEuPathDB" id="FungiDB:TEQG_00507"/>
<dbReference type="VEuPathDB" id="FungiDB:TEQG_08489"/>
<dbReference type="GO" id="GO:0000324">
    <property type="term" value="C:fungal-type vacuole"/>
    <property type="evidence" value="ECO:0007669"/>
    <property type="project" value="TreeGrafter"/>
</dbReference>
<dbReference type="GO" id="GO:0004185">
    <property type="term" value="F:serine-type carboxypeptidase activity"/>
    <property type="evidence" value="ECO:0007669"/>
    <property type="project" value="UniProtKB-EC"/>
</dbReference>
<dbReference type="GO" id="GO:0006508">
    <property type="term" value="P:proteolysis"/>
    <property type="evidence" value="ECO:0007669"/>
    <property type="project" value="UniProtKB-KW"/>
</dbReference>
<dbReference type="FunFam" id="1.10.287.410:FF:000001">
    <property type="entry name" value="Carboxypeptidase Y"/>
    <property type="match status" value="1"/>
</dbReference>
<dbReference type="Gene3D" id="1.10.287.410">
    <property type="match status" value="1"/>
</dbReference>
<dbReference type="Gene3D" id="3.40.50.1820">
    <property type="entry name" value="alpha/beta hydrolase"/>
    <property type="match status" value="1"/>
</dbReference>
<dbReference type="InterPro" id="IPR029058">
    <property type="entry name" value="AB_hydrolase_fold"/>
</dbReference>
<dbReference type="InterPro" id="IPR001563">
    <property type="entry name" value="Peptidase_S10"/>
</dbReference>
<dbReference type="InterPro" id="IPR018202">
    <property type="entry name" value="Ser_caboxypep_ser_AS"/>
</dbReference>
<dbReference type="PANTHER" id="PTHR11802:SF113">
    <property type="entry name" value="SERINE CARBOXYPEPTIDASE CTSA-4.1"/>
    <property type="match status" value="1"/>
</dbReference>
<dbReference type="PANTHER" id="PTHR11802">
    <property type="entry name" value="SERINE PROTEASE FAMILY S10 SERINE CARBOXYPEPTIDASE"/>
    <property type="match status" value="1"/>
</dbReference>
<dbReference type="Pfam" id="PF00450">
    <property type="entry name" value="Peptidase_S10"/>
    <property type="match status" value="1"/>
</dbReference>
<dbReference type="PRINTS" id="PR00724">
    <property type="entry name" value="CRBOXYPTASEC"/>
</dbReference>
<dbReference type="SUPFAM" id="SSF53474">
    <property type="entry name" value="alpha/beta-Hydrolases"/>
    <property type="match status" value="1"/>
</dbReference>
<dbReference type="PROSITE" id="PS00131">
    <property type="entry name" value="CARBOXYPEPT_SER_SER"/>
    <property type="match status" value="1"/>
</dbReference>
<proteinExistence type="inferred from homology"/>
<organism>
    <name type="scientific">Trichophyton equinum</name>
    <name type="common">Horse ringworm fungus</name>
    <dbReference type="NCBI Taxonomy" id="63418"/>
    <lineage>
        <taxon>Eukaryota</taxon>
        <taxon>Fungi</taxon>
        <taxon>Dikarya</taxon>
        <taxon>Ascomycota</taxon>
        <taxon>Pezizomycotina</taxon>
        <taxon>Eurotiomycetes</taxon>
        <taxon>Eurotiomycetidae</taxon>
        <taxon>Onygenales</taxon>
        <taxon>Arthrodermataceae</taxon>
        <taxon>Trichophyton</taxon>
    </lineage>
</organism>
<keyword id="KW-0121">Carboxypeptidase</keyword>
<keyword id="KW-1015">Disulfide bond</keyword>
<keyword id="KW-0325">Glycoprotein</keyword>
<keyword id="KW-0378">Hydrolase</keyword>
<keyword id="KW-0645">Protease</keyword>
<keyword id="KW-0732">Signal</keyword>
<keyword id="KW-0926">Vacuole</keyword>
<keyword id="KW-0865">Zymogen</keyword>
<gene>
    <name type="primary">CPYA</name>
    <name type="synonym">CarbY</name>
</gene>
<sequence>MKFLTTGLLATAALAAAQEQQVLQAEDGMGQAPQRGSSIFDETLQKFQSSLEDGISHFWSEMKTNFKDYLPLISLPKKHTRRPDSEWDHVVRGADIESVWVQGADGEKRREIDGKLHNYDLRVKAVDPSKLGVDAGVKQYSGYLDDNDADKHLFYWFFESRNDPKNDPVVLWLNGGPGCSSLTGLFLELGPATIDKNLKVVSNPYSWNSNASVIFLDQPVNVGFSYSGSSVSDTVAAGKDVYALLTLFFKQFPEYATQDFHISGESYAGHYIPVFAAEILSHKNTNINLKSALIGNGLTDPLTQYPQYRPMACGEGGYPAVLDQGTCRSMDNSLERCLSLIETCYSSESAWVCVPAAMYCNSAILAPYQQTGMNPYDVRNKCEDMASLCYPQLNVITEWLNQKSVMQALGVEVESYESCNSGINRDFLFHGDWMKPYHRLVPSVLEKIPVLIYAGDADFICNWLGNQAWTDALEWPGHKKFAEAKLEDLKIVDNKNKGKKIGQVKSSGNFTFMRIFGAGHMVPLNQPEASLEFLNRWLRGEWH</sequence>